<accession>P24307</accession>
<keyword id="KW-0067">ATP-binding</keyword>
<keyword id="KW-0235">DNA replication</keyword>
<keyword id="KW-0238">DNA-binding</keyword>
<keyword id="KW-0244">Early protein</keyword>
<keyword id="KW-0347">Helicase</keyword>
<keyword id="KW-1048">Host nucleus</keyword>
<keyword id="KW-0378">Hydrolase</keyword>
<keyword id="KW-0547">Nucleotide-binding</keyword>
<keyword id="KW-1185">Reference proteome</keyword>
<reference key="1">
    <citation type="journal article" date="1991" name="Virology">
        <title>Nucleotide sequence of a gene essential for viral DNA replication in the baculovirus Autographa californica nuclear polyhedrosis virus.</title>
        <authorList>
            <person name="Lu A."/>
            <person name="Carstens E.B."/>
        </authorList>
    </citation>
    <scope>NUCLEOTIDE SEQUENCE [GENOMIC DNA]</scope>
    <scope>FUNCTION</scope>
    <source>
        <strain>HR3</strain>
    </source>
</reference>
<reference key="2">
    <citation type="journal article" date="1994" name="Virology">
        <title>The complete DNA sequence of Autographa californica nuclear polyhedrosis virus.</title>
        <authorList>
            <person name="Ayres M.D."/>
            <person name="Howard S.C."/>
            <person name="Kuzio J."/>
            <person name="Lopez-Ferber M."/>
            <person name="Possee R.D."/>
        </authorList>
    </citation>
    <scope>NUCLEOTIDE SEQUENCE [LARGE SCALE GENOMIC DNA]</scope>
    <source>
        <strain>C6</strain>
    </source>
</reference>
<reference key="3">
    <citation type="journal article" date="1999" name="Virology">
        <title>Site-directed mutagenesis of the AcMNPV p143 gene: effects on baculovirus DNA replication.</title>
        <authorList>
            <person name="Liu G."/>
            <person name="Carstens E.B."/>
        </authorList>
    </citation>
    <scope>MUTAGENESIS OF VAL-934</scope>
    <scope>FUNCTION</scope>
</reference>
<reference key="4">
    <citation type="journal article" date="2004" name="Virology">
        <title>Baculovirus proteins IE-1, LEF-3, and P143 interact with DNA in vivo: a formaldehyde cross-linking study.</title>
        <authorList>
            <person name="Ito E."/>
            <person name="Sahri D."/>
            <person name="Knippers R."/>
            <person name="Carstens E.B."/>
        </authorList>
    </citation>
    <scope>INTERACTION WITH LEF-3 AND IE1</scope>
</reference>
<reference key="5">
    <citation type="journal article" date="2005" name="J. Virol.">
        <title>Identification of domains in Autographa californica multiple nucleopolyhedrovirus late expression factor 3 required for nuclear transport of P143.</title>
        <authorList>
            <person name="Chen Z."/>
            <person name="Carstens E.B."/>
        </authorList>
    </citation>
    <scope>FUNCTION</scope>
    <scope>SUBCELLULAR LOCATION</scope>
</reference>
<comment type="function">
    <text evidence="4 5 6">Essential for initiation of viral DNA replication, it may contribute to other functions such as controlling the switch to the late phase and leading to the inhibition of host protein synthesis. Required for late and very late gene expression.</text>
</comment>
<comment type="catalytic activity">
    <reaction>
        <text>ATP + H2O = ADP + phosphate + H(+)</text>
        <dbReference type="Rhea" id="RHEA:13065"/>
        <dbReference type="ChEBI" id="CHEBI:15377"/>
        <dbReference type="ChEBI" id="CHEBI:15378"/>
        <dbReference type="ChEBI" id="CHEBI:30616"/>
        <dbReference type="ChEBI" id="CHEBI:43474"/>
        <dbReference type="ChEBI" id="CHEBI:456216"/>
        <dbReference type="EC" id="3.6.4.12"/>
    </reaction>
</comment>
<comment type="subunit">
    <text evidence="3">Interacts with IE1 and LEF-3.</text>
</comment>
<comment type="subcellular location">
    <subcellularLocation>
        <location evidence="4">Host nucleus</location>
    </subcellularLocation>
    <text evidence="4">LEF-3 is responsible for transporting the helicase to the host nucleus.</text>
</comment>
<organismHost>
    <name type="scientific">Lepidoptera</name>
    <name type="common">butterflies and moths</name>
    <dbReference type="NCBI Taxonomy" id="7088"/>
</organismHost>
<feature type="chain" id="PRO_0000132853" description="DNA replication helicase">
    <location>
        <begin position="1"/>
        <end position="1221"/>
    </location>
</feature>
<feature type="DNA-binding region" description="H-T-H motif" evidence="2">
    <location>
        <begin position="967"/>
        <end position="981"/>
    </location>
</feature>
<feature type="short sequence motif" description="Nuclear localization signal" evidence="2">
    <location>
        <begin position="692"/>
        <end position="701"/>
    </location>
</feature>
<feature type="binding site" evidence="1">
    <location>
        <begin position="917"/>
        <end position="924"/>
    </location>
    <ligand>
        <name>ATP</name>
        <dbReference type="ChEBI" id="CHEBI:30616"/>
    </ligand>
</feature>
<feature type="mutagenesis site" description="Defective in the synthesis of viral DNA, late protein synthesis and the shutoff of host protein synthesis at the nonpermissive temperature (mutant ts8)." evidence="6">
    <original>V</original>
    <variation>M</variation>
    <location>
        <position position="934"/>
    </location>
</feature>
<feature type="sequence conflict" description="In Ref. 1." evidence="7" ref="1">
    <original>F</original>
    <variation>S</variation>
    <location>
        <position position="126"/>
    </location>
</feature>
<feature type="sequence conflict" description="In Ref. 1; AAA67907." evidence="7" ref="1">
    <original>F</original>
    <variation>L</variation>
    <location>
        <position position="1149"/>
    </location>
</feature>
<organism>
    <name type="scientific">Autographa californica nuclear polyhedrosis virus</name>
    <name type="common">AcMNPV</name>
    <dbReference type="NCBI Taxonomy" id="46015"/>
    <lineage>
        <taxon>Viruses</taxon>
        <taxon>Viruses incertae sedis</taxon>
        <taxon>Naldaviricetes</taxon>
        <taxon>Lefavirales</taxon>
        <taxon>Baculoviridae</taxon>
        <taxon>Alphabaculovirus</taxon>
        <taxon>Alphabaculovirus aucalifornicae</taxon>
    </lineage>
</organism>
<gene>
    <name type="primary">HELI</name>
    <name type="ORF">ORF95</name>
</gene>
<sequence>MIDNILQFFLKNVPQDKTYEINNLQDANHLIIRNTRTGTRRLFEYVNNFQQFLNTIRNNFNGPCAKHDMGASCEDTEEPAEKHAAQTLDGHDWVLESNDFCIFVKPFILKKHYDIIQKYINFEDFFKSTDPGYINKCVQAGDYYYWPNWPKKQAFSFNGWQLFLNIKFGIVIEPTIPIIHNKKLGPVDLFVFDPKCFLNVELSLRTNHDPPQTLFVNGKTKFDDSHEDLFILKMADGTVATCKVNGELVNSDKNFFNYIRDDINLEECITVPKYKHIVNVNLKSLRVFENNNFDKNDVDLSDTRSRKPRIVPIISASSENADYIQTQINLGLIAIHENMVKVLATHERANDPNLLQQYFEKSKFKNFDFLIYVLWKILTKNENFSYRETDIKLFLELLCESLFACDKEALNEALKRCEPYKKQEKIVFNRACNHWFDFDDTKLCVSLGYYFGIHYMIYLTQSAKNEILDHDELWAYTYENVMALNLPPDIVCKGFFRKLENVVTGVNLVFNGKHYQIVKKEDDLFKLTKSNCYKLSNIKFNNWKYLYLTTHGVYNVFTNSFHSSCPFLLGTTLPQTFKKPTDEKYLPEDAFNYMLSTSADELSIYRTYHIAKMCRDVKMLKTNTAIVNYMGNCNTCQADMRVALNNLFRDLWNLDDENLITLALYVNKNRVSDMLHNLKCKPCRSTVSGSRPKCKCYKKIKINRKALKVCLMADMFGNDAELSELIWMLIFTNKTYVSTTLIRTNSEFVNQHGEFFSKEHNKIIQYLYRTIHKIEYVDMLMDKFNDKRLFLTELRDDVAREPDVQFEESDNISKFYTHHADALMILKKYNVWWDKIILARSTDDLPTWLTRFYMRIIMSKVDLKEYSYNYLKKIVEGYLYFKRFTNFNHANAIMLMHFAASLAIPVDYGKKAIYMPGEPGSGKSSFFELLDYLVLMHKFDDDNHSGESNKETSDKEVSKLNSQLYTINELKQCSESYFKKHADSSKSDSKSRKYQGLLKYEANYKMLIVNNKPLYVDDYDDGVQDRFLIVYTNHKFVDSVKFAGSVYEHIKSKQFPIESMYYESLVTPVRLFLSHVLMYRRDPKTGFVVYKTLLSNDPMHKHNLMCLSTNNSPLYALIYILNIKTVRSATITIGEDKMEEMIGIAVQHFKNFLHPSFVQYNYKKNINASSSKSFVFNEQVLLQQIKNKFKNNYNKTTNVFYNMTMALNRNDLNTSVPNFVC</sequence>
<name>HELI_NPVAC</name>
<evidence type="ECO:0000250" key="1"/>
<evidence type="ECO:0000255" key="2"/>
<evidence type="ECO:0000269" key="3">
    <source>
    </source>
</evidence>
<evidence type="ECO:0000269" key="4">
    <source>
    </source>
</evidence>
<evidence type="ECO:0000269" key="5">
    <source>
    </source>
</evidence>
<evidence type="ECO:0000269" key="6">
    <source>
    </source>
</evidence>
<evidence type="ECO:0000305" key="7"/>
<proteinExistence type="evidence at protein level"/>
<dbReference type="EC" id="3.6.4.12"/>
<dbReference type="EMBL" id="M57687">
    <property type="protein sequence ID" value="AAA67907.1"/>
    <property type="molecule type" value="Genomic_DNA"/>
</dbReference>
<dbReference type="EMBL" id="L22858">
    <property type="protein sequence ID" value="AAA66725.1"/>
    <property type="molecule type" value="Genomic_DNA"/>
</dbReference>
<dbReference type="PIR" id="A38499">
    <property type="entry name" value="HJNVAV"/>
</dbReference>
<dbReference type="KEGG" id="vg:1403928"/>
<dbReference type="Proteomes" id="UP000008292">
    <property type="component" value="Segment"/>
</dbReference>
<dbReference type="GO" id="GO:0039715">
    <property type="term" value="C:nuclear viral factory"/>
    <property type="evidence" value="ECO:0000314"/>
    <property type="project" value="UniProtKB"/>
</dbReference>
<dbReference type="GO" id="GO:0005524">
    <property type="term" value="F:ATP binding"/>
    <property type="evidence" value="ECO:0007669"/>
    <property type="project" value="UniProtKB-KW"/>
</dbReference>
<dbReference type="GO" id="GO:0016887">
    <property type="term" value="F:ATP hydrolysis activity"/>
    <property type="evidence" value="ECO:0007669"/>
    <property type="project" value="RHEA"/>
</dbReference>
<dbReference type="GO" id="GO:0003677">
    <property type="term" value="F:DNA binding"/>
    <property type="evidence" value="ECO:0007669"/>
    <property type="project" value="UniProtKB-KW"/>
</dbReference>
<dbReference type="GO" id="GO:0003678">
    <property type="term" value="F:DNA helicase activity"/>
    <property type="evidence" value="ECO:0007669"/>
    <property type="project" value="InterPro"/>
</dbReference>
<dbReference type="GO" id="GO:0006260">
    <property type="term" value="P:DNA replication"/>
    <property type="evidence" value="ECO:0007669"/>
    <property type="project" value="UniProtKB-KW"/>
</dbReference>
<dbReference type="GO" id="GO:0019079">
    <property type="term" value="P:viral genome replication"/>
    <property type="evidence" value="ECO:0000314"/>
    <property type="project" value="UniProtKB"/>
</dbReference>
<dbReference type="Gene3D" id="3.40.50.300">
    <property type="entry name" value="P-loop containing nucleotide triphosphate hydrolases"/>
    <property type="match status" value="1"/>
</dbReference>
<dbReference type="InterPro" id="IPR006824">
    <property type="entry name" value="DNA_helicase_Baculovir"/>
</dbReference>
<dbReference type="InterPro" id="IPR027417">
    <property type="entry name" value="P-loop_NTPase"/>
</dbReference>
<dbReference type="Pfam" id="PF04735">
    <property type="entry name" value="Baculo_helicase"/>
    <property type="match status" value="1"/>
</dbReference>
<protein>
    <recommendedName>
        <fullName>DNA replication helicase</fullName>
        <ecNumber>3.6.4.12</ecNumber>
    </recommendedName>
    <alternativeName>
        <fullName>P143</fullName>
    </alternativeName>
</protein>